<evidence type="ECO:0000255" key="1">
    <source>
        <dbReference type="HAMAP-Rule" id="MF_00659"/>
    </source>
</evidence>
<name>Y282_VIBVU</name>
<sequence>MLTINSDAKLKDLLEFPCSFTYKVMGYAKPELPEKVLEVIQRHAPGDYSPAVKPSAKGNYHSVSINITATSIEQVETLYKELGEIDIVRMVL</sequence>
<comment type="similarity">
    <text evidence="1">Belongs to the UPF0250 family.</text>
</comment>
<proteinExistence type="inferred from homology"/>
<reference key="1">
    <citation type="submission" date="2002-12" db="EMBL/GenBank/DDBJ databases">
        <title>Complete genome sequence of Vibrio vulnificus CMCP6.</title>
        <authorList>
            <person name="Rhee J.H."/>
            <person name="Kim S.Y."/>
            <person name="Chung S.S."/>
            <person name="Kim J.J."/>
            <person name="Moon Y.H."/>
            <person name="Jeong H."/>
            <person name="Choy H.E."/>
        </authorList>
    </citation>
    <scope>NUCLEOTIDE SEQUENCE [LARGE SCALE GENOMIC DNA]</scope>
    <source>
        <strain>CMCP6</strain>
    </source>
</reference>
<organism>
    <name type="scientific">Vibrio vulnificus (strain CMCP6)</name>
    <dbReference type="NCBI Taxonomy" id="216895"/>
    <lineage>
        <taxon>Bacteria</taxon>
        <taxon>Pseudomonadati</taxon>
        <taxon>Pseudomonadota</taxon>
        <taxon>Gammaproteobacteria</taxon>
        <taxon>Vibrionales</taxon>
        <taxon>Vibrionaceae</taxon>
        <taxon>Vibrio</taxon>
    </lineage>
</organism>
<protein>
    <recommendedName>
        <fullName evidence="1">UPF0250 protein VV1_0282</fullName>
    </recommendedName>
</protein>
<feature type="chain" id="PRO_0000209316" description="UPF0250 protein VV1_0282">
    <location>
        <begin position="1"/>
        <end position="92"/>
    </location>
</feature>
<gene>
    <name type="ordered locus">VV1_0282</name>
</gene>
<accession>Q8DFD3</accession>
<dbReference type="EMBL" id="AE016795">
    <property type="protein sequence ID" value="AAO08815.1"/>
    <property type="molecule type" value="Genomic_DNA"/>
</dbReference>
<dbReference type="SMR" id="Q8DFD3"/>
<dbReference type="KEGG" id="vvu:VV1_0282"/>
<dbReference type="HOGENOM" id="CLU_161438_2_1_6"/>
<dbReference type="Proteomes" id="UP000002275">
    <property type="component" value="Chromosome 1"/>
</dbReference>
<dbReference type="GO" id="GO:0005829">
    <property type="term" value="C:cytosol"/>
    <property type="evidence" value="ECO:0007669"/>
    <property type="project" value="TreeGrafter"/>
</dbReference>
<dbReference type="FunFam" id="3.30.70.260:FF:000002">
    <property type="entry name" value="UPF0250 protein YbeD"/>
    <property type="match status" value="1"/>
</dbReference>
<dbReference type="Gene3D" id="3.30.70.260">
    <property type="match status" value="1"/>
</dbReference>
<dbReference type="HAMAP" id="MF_00659">
    <property type="entry name" value="UPF0250"/>
    <property type="match status" value="1"/>
</dbReference>
<dbReference type="InterPro" id="IPR007454">
    <property type="entry name" value="UPF0250_YbeD-like"/>
</dbReference>
<dbReference type="InterPro" id="IPR027471">
    <property type="entry name" value="YbeD-like_sf"/>
</dbReference>
<dbReference type="NCBIfam" id="NF003447">
    <property type="entry name" value="PRK04998.1"/>
    <property type="match status" value="1"/>
</dbReference>
<dbReference type="PANTHER" id="PTHR38036">
    <property type="entry name" value="UPF0250 PROTEIN YBED"/>
    <property type="match status" value="1"/>
</dbReference>
<dbReference type="PANTHER" id="PTHR38036:SF1">
    <property type="entry name" value="UPF0250 PROTEIN YBED"/>
    <property type="match status" value="1"/>
</dbReference>
<dbReference type="Pfam" id="PF04359">
    <property type="entry name" value="DUF493"/>
    <property type="match status" value="1"/>
</dbReference>
<dbReference type="SUPFAM" id="SSF117991">
    <property type="entry name" value="YbeD/HP0495-like"/>
    <property type="match status" value="1"/>
</dbReference>